<dbReference type="EMBL" id="AABR03013307">
    <property type="status" value="NOT_ANNOTATED_CDS"/>
    <property type="molecule type" value="Genomic_DNA"/>
</dbReference>
<dbReference type="EMBL" id="AABR03015957">
    <property type="status" value="NOT_ANNOTATED_CDS"/>
    <property type="molecule type" value="Genomic_DNA"/>
</dbReference>
<dbReference type="EMBL" id="AB022331">
    <property type="protein sequence ID" value="BAA93434.1"/>
    <property type="status" value="ALT_SEQ"/>
    <property type="molecule type" value="mRNA"/>
</dbReference>
<dbReference type="RefSeq" id="NP_001401934.1">
    <property type="nucleotide sequence ID" value="NM_001415005.1"/>
</dbReference>
<dbReference type="RefSeq" id="XP_006232344.2">
    <property type="nucleotide sequence ID" value="XM_006232282.3"/>
</dbReference>
<dbReference type="SMR" id="Q9JMI9"/>
<dbReference type="DIP" id="DIP-59688N"/>
<dbReference type="FunCoup" id="Q9JMI9">
    <property type="interactions" value="122"/>
</dbReference>
<dbReference type="IntAct" id="Q9JMI9">
    <property type="interactions" value="1"/>
</dbReference>
<dbReference type="STRING" id="10116.ENSRNOP00000075444"/>
<dbReference type="ChEMBL" id="CHEMBL4105916"/>
<dbReference type="GlyCosmos" id="Q9JMI9">
    <property type="glycosylation" value="1 site, No reported glycans"/>
</dbReference>
<dbReference type="GlyGen" id="Q9JMI9">
    <property type="glycosylation" value="1 site"/>
</dbReference>
<dbReference type="iPTMnet" id="Q9JMI9"/>
<dbReference type="PhosphoSitePlus" id="Q9JMI9"/>
<dbReference type="PaxDb" id="10116-ENSRNOP00000046270"/>
<dbReference type="Ensembl" id="ENSRNOT00000046700.6">
    <property type="protein sequence ID" value="ENSRNOP00000046270.5"/>
    <property type="gene ID" value="ENSRNOG00000016070.8"/>
</dbReference>
<dbReference type="GeneID" id="60395"/>
<dbReference type="UCSC" id="RGD:61973">
    <property type="organism name" value="rat"/>
</dbReference>
<dbReference type="AGR" id="RGD:61973"/>
<dbReference type="RGD" id="61973">
    <property type="gene designation" value="Trpc3"/>
</dbReference>
<dbReference type="VEuPathDB" id="HostDB:ENSRNOG00000016070"/>
<dbReference type="eggNOG" id="KOG3609">
    <property type="taxonomic scope" value="Eukaryota"/>
</dbReference>
<dbReference type="GeneTree" id="ENSGT01060000248588"/>
<dbReference type="InParanoid" id="Q9JMI9"/>
<dbReference type="OMA" id="REAHSYC"/>
<dbReference type="OrthoDB" id="2373987at2759"/>
<dbReference type="PhylomeDB" id="Q9JMI9"/>
<dbReference type="TreeFam" id="TF313147"/>
<dbReference type="Reactome" id="R-RNO-114508">
    <property type="pathway name" value="Effects of PIP2 hydrolysis"/>
</dbReference>
<dbReference type="Reactome" id="R-RNO-139853">
    <property type="pathway name" value="Elevation of cytosolic Ca2+ levels"/>
</dbReference>
<dbReference type="Reactome" id="R-RNO-3295583">
    <property type="pathway name" value="TRP channels"/>
</dbReference>
<dbReference type="PRO" id="PR:Q9JMI9"/>
<dbReference type="Proteomes" id="UP000002494">
    <property type="component" value="Chromosome 2"/>
</dbReference>
<dbReference type="Bgee" id="ENSRNOG00000016070">
    <property type="expression patterns" value="Expressed in cerebellum and 16 other cell types or tissues"/>
</dbReference>
<dbReference type="GO" id="GO:0034703">
    <property type="term" value="C:cation channel complex"/>
    <property type="evidence" value="ECO:0000318"/>
    <property type="project" value="GO_Central"/>
</dbReference>
<dbReference type="GO" id="GO:0005886">
    <property type="term" value="C:plasma membrane"/>
    <property type="evidence" value="ECO:0000266"/>
    <property type="project" value="RGD"/>
</dbReference>
<dbReference type="GO" id="GO:0005262">
    <property type="term" value="F:calcium channel activity"/>
    <property type="evidence" value="ECO:0000266"/>
    <property type="project" value="RGD"/>
</dbReference>
<dbReference type="GO" id="GO:0005227">
    <property type="term" value="F:calcium-activated cation channel activity"/>
    <property type="evidence" value="ECO:0000314"/>
    <property type="project" value="RGD"/>
</dbReference>
<dbReference type="GO" id="GO:0070679">
    <property type="term" value="F:inositol 1,4,5 trisphosphate binding"/>
    <property type="evidence" value="ECO:0000266"/>
    <property type="project" value="RGD"/>
</dbReference>
<dbReference type="GO" id="GO:0046872">
    <property type="term" value="F:metal ion binding"/>
    <property type="evidence" value="ECO:0007669"/>
    <property type="project" value="UniProtKB-KW"/>
</dbReference>
<dbReference type="GO" id="GO:0015279">
    <property type="term" value="F:store-operated calcium channel activity"/>
    <property type="evidence" value="ECO:0000250"/>
    <property type="project" value="UniProtKB"/>
</dbReference>
<dbReference type="GO" id="GO:0070588">
    <property type="term" value="P:calcium ion transmembrane transport"/>
    <property type="evidence" value="ECO:0000266"/>
    <property type="project" value="RGD"/>
</dbReference>
<dbReference type="GO" id="GO:0010524">
    <property type="term" value="P:positive regulation of calcium ion transport into cytosol"/>
    <property type="evidence" value="ECO:0000266"/>
    <property type="project" value="RGD"/>
</dbReference>
<dbReference type="GO" id="GO:1903244">
    <property type="term" value="P:positive regulation of cardiac muscle hypertrophy in response to stress"/>
    <property type="evidence" value="ECO:0000266"/>
    <property type="project" value="RGD"/>
</dbReference>
<dbReference type="GO" id="GO:0051480">
    <property type="term" value="P:regulation of cytosolic calcium ion concentration"/>
    <property type="evidence" value="ECO:0000318"/>
    <property type="project" value="GO_Central"/>
</dbReference>
<dbReference type="GO" id="GO:0033198">
    <property type="term" value="P:response to ATP"/>
    <property type="evidence" value="ECO:0000266"/>
    <property type="project" value="RGD"/>
</dbReference>
<dbReference type="GO" id="GO:0051592">
    <property type="term" value="P:response to calcium ion"/>
    <property type="evidence" value="ECO:0000266"/>
    <property type="project" value="RGD"/>
</dbReference>
<dbReference type="GO" id="GO:0007338">
    <property type="term" value="P:single fertilization"/>
    <property type="evidence" value="ECO:0000318"/>
    <property type="project" value="GO_Central"/>
</dbReference>
<dbReference type="FunFam" id="1.25.40.20:FF:000157">
    <property type="entry name" value="short transient receptor potential channel 6 isoform X1"/>
    <property type="match status" value="1"/>
</dbReference>
<dbReference type="FunFam" id="1.10.287.70:FF:000041">
    <property type="entry name" value="Transient receptor potential cation channel subfamily C member 7"/>
    <property type="match status" value="1"/>
</dbReference>
<dbReference type="Gene3D" id="1.25.40.20">
    <property type="entry name" value="Ankyrin repeat-containing domain"/>
    <property type="match status" value="1"/>
</dbReference>
<dbReference type="InterPro" id="IPR002110">
    <property type="entry name" value="Ankyrin_rpt"/>
</dbReference>
<dbReference type="InterPro" id="IPR036770">
    <property type="entry name" value="Ankyrin_rpt-contain_sf"/>
</dbReference>
<dbReference type="InterPro" id="IPR005821">
    <property type="entry name" value="Ion_trans_dom"/>
</dbReference>
<dbReference type="InterPro" id="IPR013555">
    <property type="entry name" value="TRP_dom"/>
</dbReference>
<dbReference type="InterPro" id="IPR005459">
    <property type="entry name" value="TRPC3_channel"/>
</dbReference>
<dbReference type="InterPro" id="IPR002153">
    <property type="entry name" value="TRPC_channel"/>
</dbReference>
<dbReference type="NCBIfam" id="TIGR00870">
    <property type="entry name" value="trp"/>
    <property type="match status" value="1"/>
</dbReference>
<dbReference type="PANTHER" id="PTHR10117:SF8">
    <property type="entry name" value="SHORT TRANSIENT RECEPTOR POTENTIAL CHANNEL 3"/>
    <property type="match status" value="1"/>
</dbReference>
<dbReference type="PANTHER" id="PTHR10117">
    <property type="entry name" value="TRANSIENT RECEPTOR POTENTIAL CHANNEL"/>
    <property type="match status" value="1"/>
</dbReference>
<dbReference type="Pfam" id="PF12796">
    <property type="entry name" value="Ank_2"/>
    <property type="match status" value="1"/>
</dbReference>
<dbReference type="Pfam" id="PF00520">
    <property type="entry name" value="Ion_trans"/>
    <property type="match status" value="1"/>
</dbReference>
<dbReference type="Pfam" id="PF08344">
    <property type="entry name" value="TRP_2"/>
    <property type="match status" value="1"/>
</dbReference>
<dbReference type="PRINTS" id="PR01097">
    <property type="entry name" value="TRNSRECEPTRP"/>
</dbReference>
<dbReference type="PRINTS" id="PR01644">
    <property type="entry name" value="TRPCHANNEL3"/>
</dbReference>
<dbReference type="SMART" id="SM00248">
    <property type="entry name" value="ANK"/>
    <property type="match status" value="3"/>
</dbReference>
<dbReference type="SMART" id="SM01420">
    <property type="entry name" value="TRP_2"/>
    <property type="match status" value="1"/>
</dbReference>
<dbReference type="SUPFAM" id="SSF48403">
    <property type="entry name" value="Ankyrin repeat"/>
    <property type="match status" value="1"/>
</dbReference>
<dbReference type="PROSITE" id="PS50297">
    <property type="entry name" value="ANK_REP_REGION"/>
    <property type="match status" value="1"/>
</dbReference>
<proteinExistence type="evidence at transcript level"/>
<reference key="1">
    <citation type="journal article" date="2004" name="Nature">
        <title>Genome sequence of the Brown Norway rat yields insights into mammalian evolution.</title>
        <authorList>
            <person name="Gibbs R.A."/>
            <person name="Weinstock G.M."/>
            <person name="Metzker M.L."/>
            <person name="Muzny D.M."/>
            <person name="Sodergren E.J."/>
            <person name="Scherer S."/>
            <person name="Scott G."/>
            <person name="Steffen D."/>
            <person name="Worley K.C."/>
            <person name="Burch P.E."/>
            <person name="Okwuonu G."/>
            <person name="Hines S."/>
            <person name="Lewis L."/>
            <person name="Deramo C."/>
            <person name="Delgado O."/>
            <person name="Dugan-Rocha S."/>
            <person name="Miner G."/>
            <person name="Morgan M."/>
            <person name="Hawes A."/>
            <person name="Gill R."/>
            <person name="Holt R.A."/>
            <person name="Adams M.D."/>
            <person name="Amanatides P.G."/>
            <person name="Baden-Tillson H."/>
            <person name="Barnstead M."/>
            <person name="Chin S."/>
            <person name="Evans C.A."/>
            <person name="Ferriera S."/>
            <person name="Fosler C."/>
            <person name="Glodek A."/>
            <person name="Gu Z."/>
            <person name="Jennings D."/>
            <person name="Kraft C.L."/>
            <person name="Nguyen T."/>
            <person name="Pfannkoch C.M."/>
            <person name="Sitter C."/>
            <person name="Sutton G.G."/>
            <person name="Venter J.C."/>
            <person name="Woodage T."/>
            <person name="Smith D."/>
            <person name="Lee H.-M."/>
            <person name="Gustafson E."/>
            <person name="Cahill P."/>
            <person name="Kana A."/>
            <person name="Doucette-Stamm L."/>
            <person name="Weinstock K."/>
            <person name="Fechtel K."/>
            <person name="Weiss R.B."/>
            <person name="Dunn D.M."/>
            <person name="Green E.D."/>
            <person name="Blakesley R.W."/>
            <person name="Bouffard G.G."/>
            <person name="De Jong P.J."/>
            <person name="Osoegawa K."/>
            <person name="Zhu B."/>
            <person name="Marra M."/>
            <person name="Schein J."/>
            <person name="Bosdet I."/>
            <person name="Fjell C."/>
            <person name="Jones S."/>
            <person name="Krzywinski M."/>
            <person name="Mathewson C."/>
            <person name="Siddiqui A."/>
            <person name="Wye N."/>
            <person name="McPherson J."/>
            <person name="Zhao S."/>
            <person name="Fraser C.M."/>
            <person name="Shetty J."/>
            <person name="Shatsman S."/>
            <person name="Geer K."/>
            <person name="Chen Y."/>
            <person name="Abramzon S."/>
            <person name="Nierman W.C."/>
            <person name="Havlak P.H."/>
            <person name="Chen R."/>
            <person name="Durbin K.J."/>
            <person name="Egan A."/>
            <person name="Ren Y."/>
            <person name="Song X.-Z."/>
            <person name="Li B."/>
            <person name="Liu Y."/>
            <person name="Qin X."/>
            <person name="Cawley S."/>
            <person name="Cooney A.J."/>
            <person name="D'Souza L.M."/>
            <person name="Martin K."/>
            <person name="Wu J.Q."/>
            <person name="Gonzalez-Garay M.L."/>
            <person name="Jackson A.R."/>
            <person name="Kalafus K.J."/>
            <person name="McLeod M.P."/>
            <person name="Milosavljevic A."/>
            <person name="Virk D."/>
            <person name="Volkov A."/>
            <person name="Wheeler D.A."/>
            <person name="Zhang Z."/>
            <person name="Bailey J.A."/>
            <person name="Eichler E.E."/>
            <person name="Tuzun E."/>
            <person name="Birney E."/>
            <person name="Mongin E."/>
            <person name="Ureta-Vidal A."/>
            <person name="Woodwark C."/>
            <person name="Zdobnov E."/>
            <person name="Bork P."/>
            <person name="Suyama M."/>
            <person name="Torrents D."/>
            <person name="Alexandersson M."/>
            <person name="Trask B.J."/>
            <person name="Young J.M."/>
            <person name="Huang H."/>
            <person name="Wang H."/>
            <person name="Xing H."/>
            <person name="Daniels S."/>
            <person name="Gietzen D."/>
            <person name="Schmidt J."/>
            <person name="Stevens K."/>
            <person name="Vitt U."/>
            <person name="Wingrove J."/>
            <person name="Camara F."/>
            <person name="Mar Alba M."/>
            <person name="Abril J.F."/>
            <person name="Guigo R."/>
            <person name="Smit A."/>
            <person name="Dubchak I."/>
            <person name="Rubin E.M."/>
            <person name="Couronne O."/>
            <person name="Poliakov A."/>
            <person name="Huebner N."/>
            <person name="Ganten D."/>
            <person name="Goesele C."/>
            <person name="Hummel O."/>
            <person name="Kreitler T."/>
            <person name="Lee Y.-A."/>
            <person name="Monti J."/>
            <person name="Schulz H."/>
            <person name="Zimdahl H."/>
            <person name="Himmelbauer H."/>
            <person name="Lehrach H."/>
            <person name="Jacob H.J."/>
            <person name="Bromberg S."/>
            <person name="Gullings-Handley J."/>
            <person name="Jensen-Seaman M.I."/>
            <person name="Kwitek A.E."/>
            <person name="Lazar J."/>
            <person name="Pasko D."/>
            <person name="Tonellato P.J."/>
            <person name="Twigger S."/>
            <person name="Ponting C.P."/>
            <person name="Duarte J.M."/>
            <person name="Rice S."/>
            <person name="Goodstadt L."/>
            <person name="Beatson S.A."/>
            <person name="Emes R.D."/>
            <person name="Winter E.E."/>
            <person name="Webber C."/>
            <person name="Brandt P."/>
            <person name="Nyakatura G."/>
            <person name="Adetobi M."/>
            <person name="Chiaromonte F."/>
            <person name="Elnitski L."/>
            <person name="Eswara P."/>
            <person name="Hardison R.C."/>
            <person name="Hou M."/>
            <person name="Kolbe D."/>
            <person name="Makova K."/>
            <person name="Miller W."/>
            <person name="Nekrutenko A."/>
            <person name="Riemer C."/>
            <person name="Schwartz S."/>
            <person name="Taylor J."/>
            <person name="Yang S."/>
            <person name="Zhang Y."/>
            <person name="Lindpaintner K."/>
            <person name="Andrews T.D."/>
            <person name="Caccamo M."/>
            <person name="Clamp M."/>
            <person name="Clarke L."/>
            <person name="Curwen V."/>
            <person name="Durbin R.M."/>
            <person name="Eyras E."/>
            <person name="Searle S.M."/>
            <person name="Cooper G.M."/>
            <person name="Batzoglou S."/>
            <person name="Brudno M."/>
            <person name="Sidow A."/>
            <person name="Stone E.A."/>
            <person name="Payseur B.A."/>
            <person name="Bourque G."/>
            <person name="Lopez-Otin C."/>
            <person name="Puente X.S."/>
            <person name="Chakrabarti K."/>
            <person name="Chatterji S."/>
            <person name="Dewey C."/>
            <person name="Pachter L."/>
            <person name="Bray N."/>
            <person name="Yap V.B."/>
            <person name="Caspi A."/>
            <person name="Tesler G."/>
            <person name="Pevzner P.A."/>
            <person name="Haussler D."/>
            <person name="Roskin K.M."/>
            <person name="Baertsch R."/>
            <person name="Clawson H."/>
            <person name="Furey T.S."/>
            <person name="Hinrichs A.S."/>
            <person name="Karolchik D."/>
            <person name="Kent W.J."/>
            <person name="Rosenbloom K.R."/>
            <person name="Trumbower H."/>
            <person name="Weirauch M."/>
            <person name="Cooper D.N."/>
            <person name="Stenson P.D."/>
            <person name="Ma B."/>
            <person name="Brent M."/>
            <person name="Arumugam M."/>
            <person name="Shteynberg D."/>
            <person name="Copley R.R."/>
            <person name="Taylor M.S."/>
            <person name="Riethman H."/>
            <person name="Mudunuri U."/>
            <person name="Peterson J."/>
            <person name="Guyer M."/>
            <person name="Felsenfeld A."/>
            <person name="Old S."/>
            <person name="Mockrin S."/>
            <person name="Collins F.S."/>
        </authorList>
    </citation>
    <scope>NUCLEOTIDE SEQUENCE [LARGE SCALE GENOMIC DNA]</scope>
    <source>
        <strain>Brown Norway</strain>
    </source>
</reference>
<reference key="2">
    <citation type="journal article" date="2000" name="J. Biol. Chem.">
        <title>A calcium-activated cation current by an alternatively spliced form of Trp3 in the heart.</title>
        <authorList>
            <person name="Ohki G."/>
            <person name="Miyoshi T."/>
            <person name="Murata M."/>
            <person name="Ishibashi K."/>
            <person name="Imai M."/>
            <person name="Suzuki M."/>
        </authorList>
    </citation>
    <scope>NUCLEOTIDE SEQUENCE [MRNA] OF 206-909</scope>
    <source>
        <tissue>Heart</tissue>
    </source>
</reference>
<evidence type="ECO:0000250" key="1">
    <source>
        <dbReference type="UniProtKB" id="Q13507"/>
    </source>
</evidence>
<evidence type="ECO:0000255" key="2"/>
<evidence type="ECO:0000256" key="3">
    <source>
        <dbReference type="SAM" id="MobiDB-lite"/>
    </source>
</evidence>
<evidence type="ECO:0000305" key="4"/>
<name>TRPC3_RAT</name>
<accession>Q9JMI9</accession>
<accession>F1LNQ7</accession>
<sequence length="909" mass="103499">MSTKVKKCREPARVTLPAPEEEDGEAEGAEPQRRRRGWRGVNGGLEPPCPRAPPSPGPDASSEGSPSRWRTAGMRDKGRRQAVRGPAFMFGARGPSLTAEEERFLDAAEYGNIPVVRKMLEESRTLNVNCVDYMGQNALQLAVGNEHLEVTELLLKKENLARIGDALLLAISKGYVRIVEAILGHPGFAASRRLTLSPCEQELRDDDFYAYDEDGTRFSPDITPIILAAHCHKYEVVHLLLLKGARIERPHDYFCRCADCAEKQRLDAFSHSRSRINAYKGLASPAYLSLSSEDPVLTALELSNELAKLANIEKEFKNDYRKLSMQCKDFVVGVLDLCRDSEEVEAILNGDLESVEPLERHGHKASLSRVKLAIKYEVKKFVAHPNCQQQLLTIWYENLSGLREQTIAIKCLVVLVVALGLPFLAIGYWIAPCSRLGKILRSPFMKFVAHAASFIIFLGLLVFNASDRFEGITTLPNITVIDYPKQIFRVKTTQFTWTEMLIMVWVLGMMWSECKELWLEGPREYIVQLWNVLDFGMLSIFIAAFTARFLAFLQATKAQQYVDSHVQESDLSEVTLPPEVQYFTYARDKWLPSDPQIISEGLYAIAVVLSFSRIAYILPANESFGPLQISLGRTVKDIFKFMVLFIMVFLAFMIGMFILYSYYLGAKVNPAFTTVEESFKTLFWSIFGLSEVTSVVLKYDHKFIENIGYVLYGIYNVTMVVVLLNMLIAMINSSYQEIEDDSDVEWKFARSKLWLSYFDDGKTLPPPFSLVPSPKSFVYFIMRITNFSKCRRRRLQKDLELGMGNSKSRLNLFTQSNSRVFESHSFNSILNQPTRYQQIMKRLIKRYVLKAQVDKENDEVNEGELKEIKQDISSLRYELLEDKSQATEELAILIHKLSEKLNPSALRCE</sequence>
<organism>
    <name type="scientific">Rattus norvegicus</name>
    <name type="common">Rat</name>
    <dbReference type="NCBI Taxonomy" id="10116"/>
    <lineage>
        <taxon>Eukaryota</taxon>
        <taxon>Metazoa</taxon>
        <taxon>Chordata</taxon>
        <taxon>Craniata</taxon>
        <taxon>Vertebrata</taxon>
        <taxon>Euteleostomi</taxon>
        <taxon>Mammalia</taxon>
        <taxon>Eutheria</taxon>
        <taxon>Euarchontoglires</taxon>
        <taxon>Glires</taxon>
        <taxon>Rodentia</taxon>
        <taxon>Myomorpha</taxon>
        <taxon>Muroidea</taxon>
        <taxon>Muridae</taxon>
        <taxon>Murinae</taxon>
        <taxon>Rattus</taxon>
    </lineage>
</organism>
<gene>
    <name type="primary">Trpc3</name>
    <name type="synonym">Trrp3</name>
</gene>
<comment type="function">
    <text evidence="1">Forms a receptor-activated non-selective calcium permeant cation channel. May be operated by a phosphatidylinositol second messenger system activated by receptor tyrosine kinases or G-protein coupled receptors.</text>
</comment>
<comment type="catalytic activity">
    <reaction evidence="1">
        <text>Ca(2+)(in) = Ca(2+)(out)</text>
        <dbReference type="Rhea" id="RHEA:29671"/>
        <dbReference type="ChEBI" id="CHEBI:29108"/>
    </reaction>
</comment>
<comment type="activity regulation">
    <text evidence="1">Activated by diacylglycerol (DAG) in a membrane-delimited fashion, independently of protein kinase C. Activated by inositol 1,4,5-triphosphate receptors (ITPR) with bound IP3. May be activated by internal calcium store depletion. Inhibited by intracellular Ca(2+).</text>
</comment>
<comment type="subunit">
    <text evidence="1">Homotetramer. Interacts with ITPR1, ITPR3, MX1 and RNF24. Interacts with JPH2; the interaction is involved in maintaining Ca(2+) homeostasis in skeletal muscle and is mediated by JPH2 'Ser-165' phosphorylation.</text>
</comment>
<comment type="subcellular location">
    <subcellularLocation>
        <location evidence="1">Cell membrane</location>
        <topology evidence="2">Multi-pass membrane protein</topology>
    </subcellularLocation>
</comment>
<comment type="domain">
    <text evidence="1">The cytoplasmic portion of the protein is required for channel assembly and gating.</text>
</comment>
<comment type="similarity">
    <text evidence="4">Belongs to the transient receptor (TC 1.A.4) family. STrpC subfamily. TRPC3 sub-subfamily.</text>
</comment>
<comment type="sequence caution" evidence="4">
    <conflict type="miscellaneous discrepancy">
        <sequence resource="EMBL-CDS" id="BAA93434"/>
    </conflict>
    <text>Chimeric cDNA.</text>
</comment>
<protein>
    <recommendedName>
        <fullName>Short transient receptor potential channel 3</fullName>
        <shortName>TrpC3</shortName>
    </recommendedName>
    <alternativeName>
        <fullName>Trp-related protein 3</fullName>
    </alternativeName>
</protein>
<feature type="chain" id="PRO_0000215312" description="Short transient receptor potential channel 3">
    <location>
        <begin position="1"/>
        <end position="909"/>
    </location>
</feature>
<feature type="topological domain" description="Cytoplasmic" evidence="1">
    <location>
        <begin position="1"/>
        <end position="447"/>
    </location>
</feature>
<feature type="transmembrane region" description="Helical" evidence="1">
    <location>
        <begin position="448"/>
        <end position="465"/>
    </location>
</feature>
<feature type="topological domain" description="Extracellular" evidence="1">
    <location>
        <begin position="466"/>
        <end position="496"/>
    </location>
</feature>
<feature type="transmembrane region" description="Helical" evidence="1">
    <location>
        <begin position="497"/>
        <end position="515"/>
    </location>
</feature>
<feature type="topological domain" description="Cytoplasmic" evidence="1">
    <location>
        <begin position="516"/>
        <end position="528"/>
    </location>
</feature>
<feature type="transmembrane region" description="Helical" evidence="1">
    <location>
        <begin position="529"/>
        <end position="550"/>
    </location>
</feature>
<feature type="topological domain" description="Extracellular" evidence="1">
    <location>
        <begin position="551"/>
        <end position="594"/>
    </location>
</feature>
<feature type="transmembrane region" description="Helical" evidence="1">
    <location>
        <begin position="595"/>
        <end position="618"/>
    </location>
</feature>
<feature type="topological domain" description="Cytoplasmic" evidence="1">
    <location>
        <begin position="619"/>
        <end position="637"/>
    </location>
</feature>
<feature type="transmembrane region" description="Helical" evidence="1">
    <location>
        <begin position="638"/>
        <end position="661"/>
    </location>
</feature>
<feature type="topological domain" description="Extracellular" evidence="1">
    <location>
        <begin position="662"/>
        <end position="701"/>
    </location>
</feature>
<feature type="transmembrane region" description="Helical" evidence="1">
    <location>
        <begin position="702"/>
        <end position="727"/>
    </location>
</feature>
<feature type="topological domain" description="Cytoplasmic" evidence="1">
    <location>
        <begin position="728"/>
        <end position="909"/>
    </location>
</feature>
<feature type="repeat" description="ANK 1" evidence="2">
    <location>
        <begin position="99"/>
        <end position="128"/>
    </location>
</feature>
<feature type="repeat" description="ANK 2" evidence="2">
    <location>
        <begin position="134"/>
        <end position="163"/>
    </location>
</feature>
<feature type="repeat" description="ANK 3" evidence="2">
    <location>
        <begin position="165"/>
        <end position="191"/>
    </location>
</feature>
<feature type="repeat" description="ANK 4" evidence="2">
    <location>
        <begin position="220"/>
        <end position="249"/>
    </location>
</feature>
<feature type="repeat" description="ANK 5" evidence="2">
    <location>
        <begin position="622"/>
        <end position="651"/>
    </location>
</feature>
<feature type="region of interest" description="Disordered" evidence="3">
    <location>
        <begin position="1"/>
        <end position="92"/>
    </location>
</feature>
<feature type="compositionally biased region" description="Acidic residues" evidence="3">
    <location>
        <begin position="19"/>
        <end position="28"/>
    </location>
</feature>
<feature type="compositionally biased region" description="Pro residues" evidence="3">
    <location>
        <begin position="47"/>
        <end position="57"/>
    </location>
</feature>
<feature type="compositionally biased region" description="Low complexity" evidence="3">
    <location>
        <begin position="58"/>
        <end position="67"/>
    </location>
</feature>
<feature type="binding site" evidence="1">
    <location>
        <position position="146"/>
    </location>
    <ligand>
        <name>Ca(2+)</name>
        <dbReference type="ChEBI" id="CHEBI:29108"/>
        <label>1</label>
    </ligand>
</feature>
<feature type="binding site" evidence="1">
    <location>
        <position position="513"/>
    </location>
    <ligand>
        <name>Ca(2+)</name>
        <dbReference type="ChEBI" id="CHEBI:29108"/>
        <label>2</label>
    </ligand>
</feature>
<feature type="binding site" evidence="1">
    <location>
        <position position="516"/>
    </location>
    <ligand>
        <name>Ca(2+)</name>
        <dbReference type="ChEBI" id="CHEBI:29108"/>
        <label>2</label>
    </ligand>
</feature>
<feature type="binding site" evidence="1">
    <location>
        <position position="531"/>
    </location>
    <ligand>
        <name>Ca(2+)</name>
        <dbReference type="ChEBI" id="CHEBI:29108"/>
        <label>2</label>
    </ligand>
</feature>
<feature type="binding site" evidence="1">
    <location>
        <position position="859"/>
    </location>
    <ligand>
        <name>Ca(2+)</name>
        <dbReference type="ChEBI" id="CHEBI:29108"/>
        <label>3</label>
    </ligand>
</feature>
<feature type="binding site" evidence="1">
    <location>
        <position position="862"/>
    </location>
    <ligand>
        <name>Ca(2+)</name>
        <dbReference type="ChEBI" id="CHEBI:29108"/>
        <label>3</label>
    </ligand>
</feature>
<feature type="binding site" evidence="1">
    <location>
        <position position="864"/>
    </location>
    <ligand>
        <name>Ca(2+)</name>
        <dbReference type="ChEBI" id="CHEBI:29108"/>
        <label>3</label>
    </ligand>
</feature>
<feature type="binding site" evidence="1">
    <location>
        <position position="871"/>
    </location>
    <ligand>
        <name>Ca(2+)</name>
        <dbReference type="ChEBI" id="CHEBI:29108"/>
        <label>1</label>
    </ligand>
</feature>
<feature type="glycosylation site" description="N-linked (GlcNAc...) asparagine" evidence="2">
    <location>
        <position position="477"/>
    </location>
</feature>
<feature type="sequence conflict" description="In Ref. 2; BAA93434." evidence="4" ref="2">
    <original>A</original>
    <variation>S</variation>
    <location>
        <position position="408"/>
    </location>
</feature>
<feature type="sequence conflict" description="In Ref. 2; BAA93434." evidence="4" ref="2">
    <original>S</original>
    <variation>T</variation>
    <location>
        <position position="434"/>
    </location>
</feature>
<feature type="sequence conflict" description="In Ref. 2; BAA93434." evidence="4" ref="2">
    <original>D</original>
    <variation>H</variation>
    <location>
        <position position="467"/>
    </location>
</feature>
<feature type="sequence conflict" description="In Ref. 2; BAA93434." evidence="4" ref="2">
    <original>Q</original>
    <variation>H</variation>
    <location>
        <position position="559"/>
    </location>
</feature>
<feature type="sequence conflict" description="In Ref. 2; BAA93434." evidence="4" ref="2">
    <original>E</original>
    <variation>K</variation>
    <location>
        <position position="579"/>
    </location>
</feature>
<feature type="sequence conflict" description="In Ref. 2; BAA93434." evidence="4" ref="2">
    <original>K</original>
    <variation>E</variation>
    <location>
        <position position="636"/>
    </location>
</feature>
<feature type="sequence conflict" description="In Ref. 2; BAA93434." evidence="4" ref="2">
    <original>K</original>
    <variation>Q</variation>
    <location>
        <position position="640"/>
    </location>
</feature>
<keyword id="KW-0040">ANK repeat</keyword>
<keyword id="KW-0106">Calcium</keyword>
<keyword id="KW-0107">Calcium channel</keyword>
<keyword id="KW-0109">Calcium transport</keyword>
<keyword id="KW-1003">Cell membrane</keyword>
<keyword id="KW-0325">Glycoprotein</keyword>
<keyword id="KW-0407">Ion channel</keyword>
<keyword id="KW-0406">Ion transport</keyword>
<keyword id="KW-0472">Membrane</keyword>
<keyword id="KW-0479">Metal-binding</keyword>
<keyword id="KW-1185">Reference proteome</keyword>
<keyword id="KW-0677">Repeat</keyword>
<keyword id="KW-0812">Transmembrane</keyword>
<keyword id="KW-1133">Transmembrane helix</keyword>
<keyword id="KW-0813">Transport</keyword>